<gene>
    <name evidence="1" type="primary">recO</name>
    <name type="ordered locus">azo1644</name>
</gene>
<evidence type="ECO:0000255" key="1">
    <source>
        <dbReference type="HAMAP-Rule" id="MF_00201"/>
    </source>
</evidence>
<comment type="function">
    <text evidence="1">Involved in DNA repair and RecF pathway recombination.</text>
</comment>
<comment type="similarity">
    <text evidence="1">Belongs to the RecO family.</text>
</comment>
<accession>A1K606</accession>
<dbReference type="EMBL" id="AM406670">
    <property type="protein sequence ID" value="CAL94261.1"/>
    <property type="molecule type" value="Genomic_DNA"/>
</dbReference>
<dbReference type="RefSeq" id="WP_011765377.1">
    <property type="nucleotide sequence ID" value="NC_008702.1"/>
</dbReference>
<dbReference type="SMR" id="A1K606"/>
<dbReference type="STRING" id="62928.azo1644"/>
<dbReference type="KEGG" id="azo:azo1644"/>
<dbReference type="eggNOG" id="COG1381">
    <property type="taxonomic scope" value="Bacteria"/>
</dbReference>
<dbReference type="HOGENOM" id="CLU_066645_1_0_4"/>
<dbReference type="Proteomes" id="UP000002588">
    <property type="component" value="Chromosome"/>
</dbReference>
<dbReference type="GO" id="GO:0043590">
    <property type="term" value="C:bacterial nucleoid"/>
    <property type="evidence" value="ECO:0007669"/>
    <property type="project" value="TreeGrafter"/>
</dbReference>
<dbReference type="GO" id="GO:0006310">
    <property type="term" value="P:DNA recombination"/>
    <property type="evidence" value="ECO:0007669"/>
    <property type="project" value="UniProtKB-UniRule"/>
</dbReference>
<dbReference type="GO" id="GO:0006302">
    <property type="term" value="P:double-strand break repair"/>
    <property type="evidence" value="ECO:0007669"/>
    <property type="project" value="TreeGrafter"/>
</dbReference>
<dbReference type="Gene3D" id="2.40.50.140">
    <property type="entry name" value="Nucleic acid-binding proteins"/>
    <property type="match status" value="1"/>
</dbReference>
<dbReference type="Gene3D" id="1.20.1440.120">
    <property type="entry name" value="Recombination protein O, C-terminal domain"/>
    <property type="match status" value="1"/>
</dbReference>
<dbReference type="HAMAP" id="MF_00201">
    <property type="entry name" value="RecO"/>
    <property type="match status" value="1"/>
</dbReference>
<dbReference type="InterPro" id="IPR037278">
    <property type="entry name" value="ARFGAP/RecO"/>
</dbReference>
<dbReference type="InterPro" id="IPR022572">
    <property type="entry name" value="DNA_rep/recomb_RecO_N"/>
</dbReference>
<dbReference type="InterPro" id="IPR012340">
    <property type="entry name" value="NA-bd_OB-fold"/>
</dbReference>
<dbReference type="InterPro" id="IPR003717">
    <property type="entry name" value="RecO"/>
</dbReference>
<dbReference type="InterPro" id="IPR042242">
    <property type="entry name" value="RecO_C"/>
</dbReference>
<dbReference type="NCBIfam" id="TIGR00613">
    <property type="entry name" value="reco"/>
    <property type="match status" value="1"/>
</dbReference>
<dbReference type="PANTHER" id="PTHR33991">
    <property type="entry name" value="DNA REPAIR PROTEIN RECO"/>
    <property type="match status" value="1"/>
</dbReference>
<dbReference type="PANTHER" id="PTHR33991:SF1">
    <property type="entry name" value="DNA REPAIR PROTEIN RECO"/>
    <property type="match status" value="1"/>
</dbReference>
<dbReference type="Pfam" id="PF02565">
    <property type="entry name" value="RecO_C"/>
    <property type="match status" value="1"/>
</dbReference>
<dbReference type="Pfam" id="PF11967">
    <property type="entry name" value="RecO_N"/>
    <property type="match status" value="1"/>
</dbReference>
<dbReference type="SUPFAM" id="SSF57863">
    <property type="entry name" value="ArfGap/RecO-like zinc finger"/>
    <property type="match status" value="1"/>
</dbReference>
<dbReference type="SUPFAM" id="SSF50249">
    <property type="entry name" value="Nucleic acid-binding proteins"/>
    <property type="match status" value="1"/>
</dbReference>
<organism>
    <name type="scientific">Azoarcus sp. (strain BH72)</name>
    <dbReference type="NCBI Taxonomy" id="418699"/>
    <lineage>
        <taxon>Bacteria</taxon>
        <taxon>Pseudomonadati</taxon>
        <taxon>Pseudomonadota</taxon>
        <taxon>Betaproteobacteria</taxon>
        <taxon>Rhodocyclales</taxon>
        <taxon>Zoogloeaceae</taxon>
        <taxon>Azoarcus</taxon>
    </lineage>
</organism>
<reference key="1">
    <citation type="journal article" date="2006" name="Nat. Biotechnol.">
        <title>Complete genome of the mutualistic, N2-fixing grass endophyte Azoarcus sp. strain BH72.</title>
        <authorList>
            <person name="Krause A."/>
            <person name="Ramakumar A."/>
            <person name="Bartels D."/>
            <person name="Battistoni F."/>
            <person name="Bekel T."/>
            <person name="Boch J."/>
            <person name="Boehm M."/>
            <person name="Friedrich F."/>
            <person name="Hurek T."/>
            <person name="Krause L."/>
            <person name="Linke B."/>
            <person name="McHardy A.C."/>
            <person name="Sarkar A."/>
            <person name="Schneiker S."/>
            <person name="Syed A.A."/>
            <person name="Thauer R."/>
            <person name="Vorhoelter F.-J."/>
            <person name="Weidner S."/>
            <person name="Puehler A."/>
            <person name="Reinhold-Hurek B."/>
            <person name="Kaiser O."/>
            <person name="Goesmann A."/>
        </authorList>
    </citation>
    <scope>NUCLEOTIDE SEQUENCE [LARGE SCALE GENOMIC DNA]</scope>
    <source>
        <strain>BH72</strain>
    </source>
</reference>
<keyword id="KW-0227">DNA damage</keyword>
<keyword id="KW-0233">DNA recombination</keyword>
<keyword id="KW-0234">DNA repair</keyword>
<keyword id="KW-1185">Reference proteome</keyword>
<name>RECO_AZOSB</name>
<feature type="chain" id="PRO_1000012119" description="DNA repair protein RecO">
    <location>
        <begin position="1"/>
        <end position="243"/>
    </location>
</feature>
<proteinExistence type="inferred from homology"/>
<sequence>MAVKQRIDQQSAWVLHTLPWRETSLIVEVFSRDHGRLALVAKGARRPHSAFRGVLMAFQPLLMDWSGGGEVRTLVRAEWQGGQPLLTGQALLCGYYLNELLVKLTPRDDPHPNLFVAYADAVRELGLGRPPPPVLRQFELALLQELGYGIELVHDVQSGEAVRGDATYAYIIEGGPAALDAPGDAPPDLPVVSGQTLLDMAAGDFSRSETLAQSKRLLRVLINHYLGGQPLQSRRVLQELLEL</sequence>
<protein>
    <recommendedName>
        <fullName evidence="1">DNA repair protein RecO</fullName>
    </recommendedName>
    <alternativeName>
        <fullName evidence="1">Recombination protein O</fullName>
    </alternativeName>
</protein>